<keyword id="KW-1185">Reference proteome</keyword>
<keyword id="KW-0687">Ribonucleoprotein</keyword>
<keyword id="KW-0689">Ribosomal protein</keyword>
<organism>
    <name type="scientific">Sorangium cellulosum (strain So ce56)</name>
    <name type="common">Polyangium cellulosum (strain So ce56)</name>
    <dbReference type="NCBI Taxonomy" id="448385"/>
    <lineage>
        <taxon>Bacteria</taxon>
        <taxon>Pseudomonadati</taxon>
        <taxon>Myxococcota</taxon>
        <taxon>Polyangia</taxon>
        <taxon>Polyangiales</taxon>
        <taxon>Polyangiaceae</taxon>
        <taxon>Sorangium</taxon>
    </lineage>
</organism>
<evidence type="ECO:0000255" key="1">
    <source>
        <dbReference type="HAMAP-Rule" id="MF_00385"/>
    </source>
</evidence>
<evidence type="ECO:0000305" key="2"/>
<accession>A9F3P4</accession>
<comment type="similarity">
    <text evidence="1">Belongs to the bacterial ribosomal protein bS16 family.</text>
</comment>
<feature type="chain" id="PRO_1000080173" description="Small ribosomal subunit protein bS16">
    <location>
        <begin position="1"/>
        <end position="88"/>
    </location>
</feature>
<gene>
    <name evidence="1" type="primary">rpsP</name>
    <name type="ordered locus">sce4439</name>
</gene>
<reference key="1">
    <citation type="journal article" date="2007" name="Nat. Biotechnol.">
        <title>Complete genome sequence of the myxobacterium Sorangium cellulosum.</title>
        <authorList>
            <person name="Schneiker S."/>
            <person name="Perlova O."/>
            <person name="Kaiser O."/>
            <person name="Gerth K."/>
            <person name="Alici A."/>
            <person name="Altmeyer M.O."/>
            <person name="Bartels D."/>
            <person name="Bekel T."/>
            <person name="Beyer S."/>
            <person name="Bode E."/>
            <person name="Bode H.B."/>
            <person name="Bolten C.J."/>
            <person name="Choudhuri J.V."/>
            <person name="Doss S."/>
            <person name="Elnakady Y.A."/>
            <person name="Frank B."/>
            <person name="Gaigalat L."/>
            <person name="Goesmann A."/>
            <person name="Groeger C."/>
            <person name="Gross F."/>
            <person name="Jelsbak L."/>
            <person name="Jelsbak L."/>
            <person name="Kalinowski J."/>
            <person name="Kegler C."/>
            <person name="Knauber T."/>
            <person name="Konietzny S."/>
            <person name="Kopp M."/>
            <person name="Krause L."/>
            <person name="Krug D."/>
            <person name="Linke B."/>
            <person name="Mahmud T."/>
            <person name="Martinez-Arias R."/>
            <person name="McHardy A.C."/>
            <person name="Merai M."/>
            <person name="Meyer F."/>
            <person name="Mormann S."/>
            <person name="Munoz-Dorado J."/>
            <person name="Perez J."/>
            <person name="Pradella S."/>
            <person name="Rachid S."/>
            <person name="Raddatz G."/>
            <person name="Rosenau F."/>
            <person name="Rueckert C."/>
            <person name="Sasse F."/>
            <person name="Scharfe M."/>
            <person name="Schuster S.C."/>
            <person name="Suen G."/>
            <person name="Treuner-Lange A."/>
            <person name="Velicer G.J."/>
            <person name="Vorholter F.-J."/>
            <person name="Weissman K.J."/>
            <person name="Welch R.D."/>
            <person name="Wenzel S.C."/>
            <person name="Whitworth D.E."/>
            <person name="Wilhelm S."/>
            <person name="Wittmann C."/>
            <person name="Bloecker H."/>
            <person name="Puehler A."/>
            <person name="Mueller R."/>
        </authorList>
    </citation>
    <scope>NUCLEOTIDE SEQUENCE [LARGE SCALE GENOMIC DNA]</scope>
    <source>
        <strain>So ce56</strain>
    </source>
</reference>
<sequence length="88" mass="9788">MAVHIRLARAGTKKTPFYRIVVADQRSPRGGRFIERLGTYDPRRTEIRLDVPRVRHWISNGAQPTHTVALLLKHPGLAQAAAPADAAK</sequence>
<proteinExistence type="inferred from homology"/>
<name>RS16_SORC5</name>
<dbReference type="EMBL" id="AM746676">
    <property type="protein sequence ID" value="CAN94602.1"/>
    <property type="molecule type" value="Genomic_DNA"/>
</dbReference>
<dbReference type="RefSeq" id="WP_012237071.1">
    <property type="nucleotide sequence ID" value="NC_010162.1"/>
</dbReference>
<dbReference type="SMR" id="A9F3P4"/>
<dbReference type="STRING" id="448385.sce4439"/>
<dbReference type="KEGG" id="scl:sce4439"/>
<dbReference type="eggNOG" id="COG0228">
    <property type="taxonomic scope" value="Bacteria"/>
</dbReference>
<dbReference type="HOGENOM" id="CLU_100590_5_2_7"/>
<dbReference type="OrthoDB" id="9807878at2"/>
<dbReference type="BioCyc" id="SCEL448385:SCE_RS22780-MONOMER"/>
<dbReference type="Proteomes" id="UP000002139">
    <property type="component" value="Chromosome"/>
</dbReference>
<dbReference type="GO" id="GO:0005737">
    <property type="term" value="C:cytoplasm"/>
    <property type="evidence" value="ECO:0007669"/>
    <property type="project" value="UniProtKB-ARBA"/>
</dbReference>
<dbReference type="GO" id="GO:0015935">
    <property type="term" value="C:small ribosomal subunit"/>
    <property type="evidence" value="ECO:0007669"/>
    <property type="project" value="TreeGrafter"/>
</dbReference>
<dbReference type="GO" id="GO:0003735">
    <property type="term" value="F:structural constituent of ribosome"/>
    <property type="evidence" value="ECO:0007669"/>
    <property type="project" value="InterPro"/>
</dbReference>
<dbReference type="GO" id="GO:0006412">
    <property type="term" value="P:translation"/>
    <property type="evidence" value="ECO:0007669"/>
    <property type="project" value="UniProtKB-UniRule"/>
</dbReference>
<dbReference type="Gene3D" id="3.30.1320.10">
    <property type="match status" value="1"/>
</dbReference>
<dbReference type="HAMAP" id="MF_00385">
    <property type="entry name" value="Ribosomal_bS16"/>
    <property type="match status" value="1"/>
</dbReference>
<dbReference type="InterPro" id="IPR000307">
    <property type="entry name" value="Ribosomal_bS16"/>
</dbReference>
<dbReference type="InterPro" id="IPR023803">
    <property type="entry name" value="Ribosomal_bS16_dom_sf"/>
</dbReference>
<dbReference type="NCBIfam" id="TIGR00002">
    <property type="entry name" value="S16"/>
    <property type="match status" value="1"/>
</dbReference>
<dbReference type="PANTHER" id="PTHR12919">
    <property type="entry name" value="30S RIBOSOMAL PROTEIN S16"/>
    <property type="match status" value="1"/>
</dbReference>
<dbReference type="PANTHER" id="PTHR12919:SF20">
    <property type="entry name" value="SMALL RIBOSOMAL SUBUNIT PROTEIN BS16M"/>
    <property type="match status" value="1"/>
</dbReference>
<dbReference type="Pfam" id="PF00886">
    <property type="entry name" value="Ribosomal_S16"/>
    <property type="match status" value="1"/>
</dbReference>
<dbReference type="SUPFAM" id="SSF54565">
    <property type="entry name" value="Ribosomal protein S16"/>
    <property type="match status" value="1"/>
</dbReference>
<protein>
    <recommendedName>
        <fullName evidence="1">Small ribosomal subunit protein bS16</fullName>
    </recommendedName>
    <alternativeName>
        <fullName evidence="2">30S ribosomal protein S16</fullName>
    </alternativeName>
</protein>